<accession>Q2FKP7</accession>
<protein>
    <recommendedName>
        <fullName evidence="1">Serine--tRNA ligase</fullName>
        <ecNumber evidence="1">6.1.1.11</ecNumber>
    </recommendedName>
    <alternativeName>
        <fullName evidence="1">Seryl-tRNA synthetase</fullName>
        <shortName evidence="1">SerRS</shortName>
    </alternativeName>
    <alternativeName>
        <fullName evidence="1">Seryl-tRNA(Ser/Sec) synthetase</fullName>
    </alternativeName>
</protein>
<name>SYS_STAA3</name>
<dbReference type="EC" id="6.1.1.11" evidence="1"/>
<dbReference type="EMBL" id="CP000255">
    <property type="protein sequence ID" value="ABD21389.1"/>
    <property type="molecule type" value="Genomic_DNA"/>
</dbReference>
<dbReference type="RefSeq" id="WP_000884334.1">
    <property type="nucleotide sequence ID" value="NZ_CP027476.1"/>
</dbReference>
<dbReference type="SMR" id="Q2FKP7"/>
<dbReference type="KEGG" id="saa:SAUSA300_0009"/>
<dbReference type="HOGENOM" id="CLU_023797_1_1_9"/>
<dbReference type="OMA" id="GYTPCFR"/>
<dbReference type="UniPathway" id="UPA00906">
    <property type="reaction ID" value="UER00895"/>
</dbReference>
<dbReference type="Proteomes" id="UP000001939">
    <property type="component" value="Chromosome"/>
</dbReference>
<dbReference type="GO" id="GO:0005737">
    <property type="term" value="C:cytoplasm"/>
    <property type="evidence" value="ECO:0007669"/>
    <property type="project" value="UniProtKB-SubCell"/>
</dbReference>
<dbReference type="GO" id="GO:0005524">
    <property type="term" value="F:ATP binding"/>
    <property type="evidence" value="ECO:0007669"/>
    <property type="project" value="UniProtKB-UniRule"/>
</dbReference>
<dbReference type="GO" id="GO:0140096">
    <property type="term" value="F:catalytic activity, acting on a protein"/>
    <property type="evidence" value="ECO:0007669"/>
    <property type="project" value="UniProtKB-ARBA"/>
</dbReference>
<dbReference type="GO" id="GO:0004828">
    <property type="term" value="F:serine-tRNA ligase activity"/>
    <property type="evidence" value="ECO:0007669"/>
    <property type="project" value="UniProtKB-UniRule"/>
</dbReference>
<dbReference type="GO" id="GO:0016740">
    <property type="term" value="F:transferase activity"/>
    <property type="evidence" value="ECO:0007669"/>
    <property type="project" value="UniProtKB-ARBA"/>
</dbReference>
<dbReference type="GO" id="GO:0016260">
    <property type="term" value="P:selenocysteine biosynthetic process"/>
    <property type="evidence" value="ECO:0007669"/>
    <property type="project" value="UniProtKB-UniRule"/>
</dbReference>
<dbReference type="GO" id="GO:0006434">
    <property type="term" value="P:seryl-tRNA aminoacylation"/>
    <property type="evidence" value="ECO:0007669"/>
    <property type="project" value="UniProtKB-UniRule"/>
</dbReference>
<dbReference type="CDD" id="cd00770">
    <property type="entry name" value="SerRS_core"/>
    <property type="match status" value="1"/>
</dbReference>
<dbReference type="Gene3D" id="3.30.930.10">
    <property type="entry name" value="Bira Bifunctional Protein, Domain 2"/>
    <property type="match status" value="1"/>
</dbReference>
<dbReference type="Gene3D" id="1.10.287.40">
    <property type="entry name" value="Serine-tRNA synthetase, tRNA binding domain"/>
    <property type="match status" value="1"/>
</dbReference>
<dbReference type="HAMAP" id="MF_00176">
    <property type="entry name" value="Ser_tRNA_synth_type1"/>
    <property type="match status" value="1"/>
</dbReference>
<dbReference type="InterPro" id="IPR002314">
    <property type="entry name" value="aa-tRNA-synt_IIb"/>
</dbReference>
<dbReference type="InterPro" id="IPR006195">
    <property type="entry name" value="aa-tRNA-synth_II"/>
</dbReference>
<dbReference type="InterPro" id="IPR045864">
    <property type="entry name" value="aa-tRNA-synth_II/BPL/LPL"/>
</dbReference>
<dbReference type="InterPro" id="IPR002317">
    <property type="entry name" value="Ser-tRNA-ligase_type_1"/>
</dbReference>
<dbReference type="InterPro" id="IPR015866">
    <property type="entry name" value="Ser-tRNA-synth_1_N"/>
</dbReference>
<dbReference type="InterPro" id="IPR042103">
    <property type="entry name" value="SerRS_1_N_sf"/>
</dbReference>
<dbReference type="InterPro" id="IPR033729">
    <property type="entry name" value="SerRS_core"/>
</dbReference>
<dbReference type="InterPro" id="IPR010978">
    <property type="entry name" value="tRNA-bd_arm"/>
</dbReference>
<dbReference type="NCBIfam" id="TIGR00414">
    <property type="entry name" value="serS"/>
    <property type="match status" value="1"/>
</dbReference>
<dbReference type="PANTHER" id="PTHR43697:SF1">
    <property type="entry name" value="SERINE--TRNA LIGASE"/>
    <property type="match status" value="1"/>
</dbReference>
<dbReference type="PANTHER" id="PTHR43697">
    <property type="entry name" value="SERYL-TRNA SYNTHETASE"/>
    <property type="match status" value="1"/>
</dbReference>
<dbReference type="Pfam" id="PF02403">
    <property type="entry name" value="Seryl_tRNA_N"/>
    <property type="match status" value="1"/>
</dbReference>
<dbReference type="Pfam" id="PF00587">
    <property type="entry name" value="tRNA-synt_2b"/>
    <property type="match status" value="1"/>
</dbReference>
<dbReference type="PIRSF" id="PIRSF001529">
    <property type="entry name" value="Ser-tRNA-synth_IIa"/>
    <property type="match status" value="1"/>
</dbReference>
<dbReference type="PRINTS" id="PR00981">
    <property type="entry name" value="TRNASYNTHSER"/>
</dbReference>
<dbReference type="SUPFAM" id="SSF55681">
    <property type="entry name" value="Class II aaRS and biotin synthetases"/>
    <property type="match status" value="1"/>
</dbReference>
<dbReference type="SUPFAM" id="SSF46589">
    <property type="entry name" value="tRNA-binding arm"/>
    <property type="match status" value="1"/>
</dbReference>
<dbReference type="PROSITE" id="PS50862">
    <property type="entry name" value="AA_TRNA_LIGASE_II"/>
    <property type="match status" value="1"/>
</dbReference>
<comment type="function">
    <text evidence="1">Catalyzes the attachment of serine to tRNA(Ser). Is also able to aminoacylate tRNA(Sec) with serine, to form the misacylated tRNA L-seryl-tRNA(Sec), which will be further converted into selenocysteinyl-tRNA(Sec).</text>
</comment>
<comment type="catalytic activity">
    <reaction evidence="1">
        <text>tRNA(Ser) + L-serine + ATP = L-seryl-tRNA(Ser) + AMP + diphosphate + H(+)</text>
        <dbReference type="Rhea" id="RHEA:12292"/>
        <dbReference type="Rhea" id="RHEA-COMP:9669"/>
        <dbReference type="Rhea" id="RHEA-COMP:9703"/>
        <dbReference type="ChEBI" id="CHEBI:15378"/>
        <dbReference type="ChEBI" id="CHEBI:30616"/>
        <dbReference type="ChEBI" id="CHEBI:33019"/>
        <dbReference type="ChEBI" id="CHEBI:33384"/>
        <dbReference type="ChEBI" id="CHEBI:78442"/>
        <dbReference type="ChEBI" id="CHEBI:78533"/>
        <dbReference type="ChEBI" id="CHEBI:456215"/>
        <dbReference type="EC" id="6.1.1.11"/>
    </reaction>
</comment>
<comment type="catalytic activity">
    <reaction evidence="1">
        <text>tRNA(Sec) + L-serine + ATP = L-seryl-tRNA(Sec) + AMP + diphosphate + H(+)</text>
        <dbReference type="Rhea" id="RHEA:42580"/>
        <dbReference type="Rhea" id="RHEA-COMP:9742"/>
        <dbReference type="Rhea" id="RHEA-COMP:10128"/>
        <dbReference type="ChEBI" id="CHEBI:15378"/>
        <dbReference type="ChEBI" id="CHEBI:30616"/>
        <dbReference type="ChEBI" id="CHEBI:33019"/>
        <dbReference type="ChEBI" id="CHEBI:33384"/>
        <dbReference type="ChEBI" id="CHEBI:78442"/>
        <dbReference type="ChEBI" id="CHEBI:78533"/>
        <dbReference type="ChEBI" id="CHEBI:456215"/>
        <dbReference type="EC" id="6.1.1.11"/>
    </reaction>
</comment>
<comment type="pathway">
    <text evidence="1">Aminoacyl-tRNA biosynthesis; selenocysteinyl-tRNA(Sec) biosynthesis; L-seryl-tRNA(Sec) from L-serine and tRNA(Sec): step 1/1.</text>
</comment>
<comment type="subunit">
    <text evidence="1">Homodimer. The tRNA molecule binds across the dimer.</text>
</comment>
<comment type="subcellular location">
    <subcellularLocation>
        <location evidence="1">Cytoplasm</location>
    </subcellularLocation>
</comment>
<comment type="domain">
    <text evidence="1">Consists of two distinct domains, a catalytic core and a N-terminal extension that is involved in tRNA binding.</text>
</comment>
<comment type="similarity">
    <text evidence="1">Belongs to the class-II aminoacyl-tRNA synthetase family. Type-1 seryl-tRNA synthetase subfamily.</text>
</comment>
<reference key="1">
    <citation type="journal article" date="2006" name="Lancet">
        <title>Complete genome sequence of USA300, an epidemic clone of community-acquired meticillin-resistant Staphylococcus aureus.</title>
        <authorList>
            <person name="Diep B.A."/>
            <person name="Gill S.R."/>
            <person name="Chang R.F."/>
            <person name="Phan T.H."/>
            <person name="Chen J.H."/>
            <person name="Davidson M.G."/>
            <person name="Lin F."/>
            <person name="Lin J."/>
            <person name="Carleton H.A."/>
            <person name="Mongodin E.F."/>
            <person name="Sensabaugh G.F."/>
            <person name="Perdreau-Remington F."/>
        </authorList>
    </citation>
    <scope>NUCLEOTIDE SEQUENCE [LARGE SCALE GENOMIC DNA]</scope>
    <source>
        <strain>USA300</strain>
    </source>
</reference>
<organism>
    <name type="scientific">Staphylococcus aureus (strain USA300)</name>
    <dbReference type="NCBI Taxonomy" id="367830"/>
    <lineage>
        <taxon>Bacteria</taxon>
        <taxon>Bacillati</taxon>
        <taxon>Bacillota</taxon>
        <taxon>Bacilli</taxon>
        <taxon>Bacillales</taxon>
        <taxon>Staphylococcaceae</taxon>
        <taxon>Staphylococcus</taxon>
    </lineage>
</organism>
<proteinExistence type="inferred from homology"/>
<evidence type="ECO:0000255" key="1">
    <source>
        <dbReference type="HAMAP-Rule" id="MF_00176"/>
    </source>
</evidence>
<gene>
    <name evidence="1" type="primary">serS</name>
    <name type="ordered locus">SAUSA300_0009</name>
</gene>
<sequence>MLDIRLFRNEPDTVKSKIELRGDDPKVVDEILELDEQRRKLISATEEMKARRNKVSEEIALKKRNKENADDVIAEMRTLGDDIKEKDSQLNEIDNKMTGILCRIPNLISDDVPQGESDEDNVEVKKWGTPREFSFEPKAHWDIVEELKMADFDRAAKVSGARFVYLTNEGAQLERALMNYMITKHTTQHGYTEMMVPQLVNADTMYGTGQLPKFEEDLFKVEKEGLYTIPTAEVPLTNFYRNEIIQPGVLPEKFTGQSACFRSEAGSAGRDTRGLIRLHQFDKVEMVRFEQPEDSWNALEEMTTNAEAILEELGLPYRRVILCTGDIGFSASKTYDLEVWLPSYNDYKEISSCSNCTDFQARRANIRFKRDKAAKPELAHTLNGSGLAVGRTFAAIVENYQNEDGTVTIPEALVPFMGGKTQISKPVK</sequence>
<keyword id="KW-0030">Aminoacyl-tRNA synthetase</keyword>
<keyword id="KW-0067">ATP-binding</keyword>
<keyword id="KW-0963">Cytoplasm</keyword>
<keyword id="KW-0436">Ligase</keyword>
<keyword id="KW-0547">Nucleotide-binding</keyword>
<keyword id="KW-0648">Protein biosynthesis</keyword>
<feature type="chain" id="PRO_1000019830" description="Serine--tRNA ligase">
    <location>
        <begin position="1"/>
        <end position="428"/>
    </location>
</feature>
<feature type="binding site" evidence="1">
    <location>
        <begin position="231"/>
        <end position="233"/>
    </location>
    <ligand>
        <name>L-serine</name>
        <dbReference type="ChEBI" id="CHEBI:33384"/>
    </ligand>
</feature>
<feature type="binding site" evidence="1">
    <location>
        <begin position="262"/>
        <end position="264"/>
    </location>
    <ligand>
        <name>ATP</name>
        <dbReference type="ChEBI" id="CHEBI:30616"/>
    </ligand>
</feature>
<feature type="binding site" evidence="1">
    <location>
        <position position="285"/>
    </location>
    <ligand>
        <name>L-serine</name>
        <dbReference type="ChEBI" id="CHEBI:33384"/>
    </ligand>
</feature>
<feature type="binding site" evidence="1">
    <location>
        <begin position="349"/>
        <end position="352"/>
    </location>
    <ligand>
        <name>ATP</name>
        <dbReference type="ChEBI" id="CHEBI:30616"/>
    </ligand>
</feature>
<feature type="binding site" evidence="1">
    <location>
        <position position="385"/>
    </location>
    <ligand>
        <name>L-serine</name>
        <dbReference type="ChEBI" id="CHEBI:33384"/>
    </ligand>
</feature>